<keyword id="KW-0249">Electron transport</keyword>
<keyword id="KW-0349">Heme</keyword>
<keyword id="KW-0408">Iron</keyword>
<keyword id="KW-0472">Membrane</keyword>
<keyword id="KW-0479">Metal-binding</keyword>
<keyword id="KW-0496">Mitochondrion</keyword>
<keyword id="KW-0999">Mitochondrion inner membrane</keyword>
<keyword id="KW-0679">Respiratory chain</keyword>
<keyword id="KW-0812">Transmembrane</keyword>
<keyword id="KW-1133">Transmembrane helix</keyword>
<keyword id="KW-0813">Transport</keyword>
<keyword id="KW-0830">Ubiquinone</keyword>
<comment type="function">
    <text evidence="2">Component of the ubiquinol-cytochrome c reductase complex (complex III or cytochrome b-c1 complex) that is part of the mitochondrial respiratory chain. The b-c1 complex mediates electron transfer from ubiquinol to cytochrome c. Contributes to the generation of a proton gradient across the mitochondrial membrane that is then used for ATP synthesis.</text>
</comment>
<comment type="cofactor">
    <cofactor evidence="2">
        <name>heme b</name>
        <dbReference type="ChEBI" id="CHEBI:60344"/>
    </cofactor>
    <text evidence="2">Binds 2 heme b groups non-covalently.</text>
</comment>
<comment type="subunit">
    <text evidence="2">The cytochrome bc1 complex contains 11 subunits: 3 respiratory subunits (MT-CYB, CYC1 and UQCRFS1), 2 core proteins (UQCRC1 and UQCRC2) and 6 low-molecular weight proteins (UQCRH/QCR6, UQCRB/QCR7, UQCRQ/QCR8, UQCR10/QCR9, UQCR11/QCR10 and a cleavage product of UQCRFS1). This cytochrome bc1 complex then forms a dimer.</text>
</comment>
<comment type="subcellular location">
    <subcellularLocation>
        <location evidence="2">Mitochondrion inner membrane</location>
        <topology evidence="2">Multi-pass membrane protein</topology>
    </subcellularLocation>
</comment>
<comment type="miscellaneous">
    <text evidence="1">Heme 1 (or BL or b562) is low-potential and absorbs at about 562 nm, and heme 2 (or BH or b566) is high-potential and absorbs at about 566 nm.</text>
</comment>
<comment type="similarity">
    <text evidence="3 4">Belongs to the cytochrome b family.</text>
</comment>
<comment type="caution">
    <text evidence="2">The full-length protein contains only eight transmembrane helices, not nine as predicted by bioinformatics tools.</text>
</comment>
<geneLocation type="mitochondrion"/>
<feature type="chain" id="PRO_0000061628" description="Cytochrome b">
    <location>
        <begin position="1"/>
        <end position="379"/>
    </location>
</feature>
<feature type="transmembrane region" description="Helical" evidence="2">
    <location>
        <begin position="33"/>
        <end position="53"/>
    </location>
</feature>
<feature type="transmembrane region" description="Helical" evidence="2">
    <location>
        <begin position="77"/>
        <end position="98"/>
    </location>
</feature>
<feature type="transmembrane region" description="Helical" evidence="2">
    <location>
        <begin position="113"/>
        <end position="133"/>
    </location>
</feature>
<feature type="transmembrane region" description="Helical" evidence="2">
    <location>
        <begin position="178"/>
        <end position="198"/>
    </location>
</feature>
<feature type="transmembrane region" description="Helical" evidence="2">
    <location>
        <begin position="226"/>
        <end position="246"/>
    </location>
</feature>
<feature type="transmembrane region" description="Helical" evidence="2">
    <location>
        <begin position="288"/>
        <end position="308"/>
    </location>
</feature>
<feature type="transmembrane region" description="Helical" evidence="2">
    <location>
        <begin position="320"/>
        <end position="340"/>
    </location>
</feature>
<feature type="transmembrane region" description="Helical" evidence="2">
    <location>
        <begin position="347"/>
        <end position="367"/>
    </location>
</feature>
<feature type="binding site" description="axial binding residue" evidence="2">
    <location>
        <position position="83"/>
    </location>
    <ligand>
        <name>heme b</name>
        <dbReference type="ChEBI" id="CHEBI:60344"/>
        <label>b562</label>
    </ligand>
    <ligandPart>
        <name>Fe</name>
        <dbReference type="ChEBI" id="CHEBI:18248"/>
    </ligandPart>
</feature>
<feature type="binding site" description="axial binding residue" evidence="2">
    <location>
        <position position="97"/>
    </location>
    <ligand>
        <name>heme b</name>
        <dbReference type="ChEBI" id="CHEBI:60344"/>
        <label>b566</label>
    </ligand>
    <ligandPart>
        <name>Fe</name>
        <dbReference type="ChEBI" id="CHEBI:18248"/>
    </ligandPart>
</feature>
<feature type="binding site" description="axial binding residue" evidence="2">
    <location>
        <position position="182"/>
    </location>
    <ligand>
        <name>heme b</name>
        <dbReference type="ChEBI" id="CHEBI:60344"/>
        <label>b562</label>
    </ligand>
    <ligandPart>
        <name>Fe</name>
        <dbReference type="ChEBI" id="CHEBI:18248"/>
    </ligandPart>
</feature>
<feature type="binding site" description="axial binding residue" evidence="2">
    <location>
        <position position="196"/>
    </location>
    <ligand>
        <name>heme b</name>
        <dbReference type="ChEBI" id="CHEBI:60344"/>
        <label>b566</label>
    </ligand>
    <ligandPart>
        <name>Fe</name>
        <dbReference type="ChEBI" id="CHEBI:18248"/>
    </ligandPart>
</feature>
<feature type="binding site" evidence="2">
    <location>
        <position position="201"/>
    </location>
    <ligand>
        <name>a ubiquinone</name>
        <dbReference type="ChEBI" id="CHEBI:16389"/>
    </ligand>
</feature>
<accession>Q6ELV9</accession>
<dbReference type="EMBL" id="AY292725">
    <property type="protein sequence ID" value="AAS54921.1"/>
    <property type="molecule type" value="Genomic_DNA"/>
</dbReference>
<dbReference type="GO" id="GO:0005743">
    <property type="term" value="C:mitochondrial inner membrane"/>
    <property type="evidence" value="ECO:0007669"/>
    <property type="project" value="UniProtKB-SubCell"/>
</dbReference>
<dbReference type="GO" id="GO:0045275">
    <property type="term" value="C:respiratory chain complex III"/>
    <property type="evidence" value="ECO:0007669"/>
    <property type="project" value="InterPro"/>
</dbReference>
<dbReference type="GO" id="GO:0046872">
    <property type="term" value="F:metal ion binding"/>
    <property type="evidence" value="ECO:0007669"/>
    <property type="project" value="UniProtKB-KW"/>
</dbReference>
<dbReference type="GO" id="GO:0008121">
    <property type="term" value="F:ubiquinol-cytochrome-c reductase activity"/>
    <property type="evidence" value="ECO:0007669"/>
    <property type="project" value="InterPro"/>
</dbReference>
<dbReference type="GO" id="GO:0006122">
    <property type="term" value="P:mitochondrial electron transport, ubiquinol to cytochrome c"/>
    <property type="evidence" value="ECO:0007669"/>
    <property type="project" value="TreeGrafter"/>
</dbReference>
<dbReference type="CDD" id="cd00290">
    <property type="entry name" value="cytochrome_b_C"/>
    <property type="match status" value="1"/>
</dbReference>
<dbReference type="CDD" id="cd00284">
    <property type="entry name" value="Cytochrome_b_N"/>
    <property type="match status" value="1"/>
</dbReference>
<dbReference type="FunFam" id="1.20.810.10:FF:000002">
    <property type="entry name" value="Cytochrome b"/>
    <property type="match status" value="1"/>
</dbReference>
<dbReference type="Gene3D" id="1.20.810.10">
    <property type="entry name" value="Cytochrome Bc1 Complex, Chain C"/>
    <property type="match status" value="1"/>
</dbReference>
<dbReference type="InterPro" id="IPR005798">
    <property type="entry name" value="Cyt_b/b6_C"/>
</dbReference>
<dbReference type="InterPro" id="IPR036150">
    <property type="entry name" value="Cyt_b/b6_C_sf"/>
</dbReference>
<dbReference type="InterPro" id="IPR005797">
    <property type="entry name" value="Cyt_b/b6_N"/>
</dbReference>
<dbReference type="InterPro" id="IPR027387">
    <property type="entry name" value="Cytb/b6-like_sf"/>
</dbReference>
<dbReference type="InterPro" id="IPR030689">
    <property type="entry name" value="Cytochrome_b"/>
</dbReference>
<dbReference type="InterPro" id="IPR048260">
    <property type="entry name" value="Cytochrome_b_C_euk/bac"/>
</dbReference>
<dbReference type="InterPro" id="IPR048259">
    <property type="entry name" value="Cytochrome_b_N_euk/bac"/>
</dbReference>
<dbReference type="InterPro" id="IPR016174">
    <property type="entry name" value="Di-haem_cyt_TM"/>
</dbReference>
<dbReference type="PANTHER" id="PTHR19271">
    <property type="entry name" value="CYTOCHROME B"/>
    <property type="match status" value="1"/>
</dbReference>
<dbReference type="PANTHER" id="PTHR19271:SF16">
    <property type="entry name" value="CYTOCHROME B"/>
    <property type="match status" value="1"/>
</dbReference>
<dbReference type="Pfam" id="PF00032">
    <property type="entry name" value="Cytochrom_B_C"/>
    <property type="match status" value="1"/>
</dbReference>
<dbReference type="Pfam" id="PF00033">
    <property type="entry name" value="Cytochrome_B"/>
    <property type="match status" value="1"/>
</dbReference>
<dbReference type="PIRSF" id="PIRSF038885">
    <property type="entry name" value="COB"/>
    <property type="match status" value="1"/>
</dbReference>
<dbReference type="SUPFAM" id="SSF81648">
    <property type="entry name" value="a domain/subunit of cytochrome bc1 complex (Ubiquinol-cytochrome c reductase)"/>
    <property type="match status" value="1"/>
</dbReference>
<dbReference type="SUPFAM" id="SSF81342">
    <property type="entry name" value="Transmembrane di-heme cytochromes"/>
    <property type="match status" value="1"/>
</dbReference>
<dbReference type="PROSITE" id="PS51003">
    <property type="entry name" value="CYTB_CTER"/>
    <property type="match status" value="1"/>
</dbReference>
<dbReference type="PROSITE" id="PS51002">
    <property type="entry name" value="CYTB_NTER"/>
    <property type="match status" value="1"/>
</dbReference>
<proteinExistence type="inferred from homology"/>
<reference key="1">
    <citation type="journal article" date="2004" name="Syst. Biol.">
        <title>A molecular supermatrix of the rabbits and hares (Leporidae) allows for the identification of five intercontinental exchanges during the Miocene.</title>
        <authorList>
            <person name="Matthee C.A."/>
            <person name="van Vuuren B.J."/>
            <person name="Bell D."/>
            <person name="Robinson T.J."/>
        </authorList>
    </citation>
    <scope>NUCLEOTIDE SEQUENCE [GENOMIC DNA]</scope>
</reference>
<gene>
    <name type="primary">MT-CYB</name>
    <name type="synonym">COB</name>
    <name type="synonym">CYTB</name>
    <name type="synonym">MTCYB</name>
</gene>
<protein>
    <recommendedName>
        <fullName>Cytochrome b</fullName>
    </recommendedName>
    <alternativeName>
        <fullName>Complex III subunit 3</fullName>
    </alternativeName>
    <alternativeName>
        <fullName>Complex III subunit III</fullName>
    </alternativeName>
    <alternativeName>
        <fullName>Cytochrome b-c1 complex subunit 3</fullName>
    </alternativeName>
    <alternativeName>
        <fullName>Ubiquinol-cytochrome-c reductase complex cytochrome b subunit</fullName>
    </alternativeName>
</protein>
<sequence length="379" mass="42736">MTNIRKTHPLLKIVNHSLIDLPXPSNISAWWNFGSLLGLCLVIQILTGLFLAMHYTSDTLTAFSSVTHICRDVNYGWLIRYLHANGASMFFICLYMHVGRGIYYGSYTYLETWNIGIILLFAVMATAFMGYVLPWGQMSFWGATVITNLLSAIPYIGTTLVEWIWGGFSVDKATLTRFFAFHFILPFIIAALVMVHLLFLHETGSNNPSGIPSNSDKIPFHPYYTIKDALGFLVLILLLLLLVLFSPDLLGDPDNYTPANPLNTPPHIKPEWYFLFAYAILRSIPNKLGGVLALIMSILVLAIIPFLHISKQRSMMFRPISQVLFWVLVADLLTLTWIGGQPVEHPFITIGQVASILYFSIILILMPLASLIENKILKW</sequence>
<evidence type="ECO:0000250" key="1"/>
<evidence type="ECO:0000250" key="2">
    <source>
        <dbReference type="UniProtKB" id="P00157"/>
    </source>
</evidence>
<evidence type="ECO:0000255" key="3">
    <source>
        <dbReference type="PROSITE-ProRule" id="PRU00967"/>
    </source>
</evidence>
<evidence type="ECO:0000255" key="4">
    <source>
        <dbReference type="PROSITE-ProRule" id="PRU00968"/>
    </source>
</evidence>
<name>CYB_SYLOB</name>
<organism>
    <name type="scientific">Sylvilagus obscurus</name>
    <name type="common">Appalachian cottontail</name>
    <dbReference type="NCBI Taxonomy" id="50379"/>
    <lineage>
        <taxon>Eukaryota</taxon>
        <taxon>Metazoa</taxon>
        <taxon>Chordata</taxon>
        <taxon>Craniata</taxon>
        <taxon>Vertebrata</taxon>
        <taxon>Euteleostomi</taxon>
        <taxon>Mammalia</taxon>
        <taxon>Eutheria</taxon>
        <taxon>Euarchontoglires</taxon>
        <taxon>Glires</taxon>
        <taxon>Lagomorpha</taxon>
        <taxon>Leporidae</taxon>
        <taxon>Sylvilagus</taxon>
    </lineage>
</organism>